<proteinExistence type="inferred from homology"/>
<dbReference type="EC" id="2.7.7.8" evidence="1"/>
<dbReference type="EMBL" id="CP000312">
    <property type="protein sequence ID" value="ABG87059.1"/>
    <property type="molecule type" value="Genomic_DNA"/>
</dbReference>
<dbReference type="RefSeq" id="WP_011592585.1">
    <property type="nucleotide sequence ID" value="NC_008262.1"/>
</dbReference>
<dbReference type="SMR" id="Q0SSE0"/>
<dbReference type="KEGG" id="cpr:CPR_1652"/>
<dbReference type="Proteomes" id="UP000001824">
    <property type="component" value="Chromosome"/>
</dbReference>
<dbReference type="GO" id="GO:0005829">
    <property type="term" value="C:cytosol"/>
    <property type="evidence" value="ECO:0007669"/>
    <property type="project" value="TreeGrafter"/>
</dbReference>
<dbReference type="GO" id="GO:0000175">
    <property type="term" value="F:3'-5'-RNA exonuclease activity"/>
    <property type="evidence" value="ECO:0007669"/>
    <property type="project" value="TreeGrafter"/>
</dbReference>
<dbReference type="GO" id="GO:0000287">
    <property type="term" value="F:magnesium ion binding"/>
    <property type="evidence" value="ECO:0007669"/>
    <property type="project" value="UniProtKB-UniRule"/>
</dbReference>
<dbReference type="GO" id="GO:0004654">
    <property type="term" value="F:polyribonucleotide nucleotidyltransferase activity"/>
    <property type="evidence" value="ECO:0007669"/>
    <property type="project" value="UniProtKB-UniRule"/>
</dbReference>
<dbReference type="GO" id="GO:0003723">
    <property type="term" value="F:RNA binding"/>
    <property type="evidence" value="ECO:0007669"/>
    <property type="project" value="UniProtKB-UniRule"/>
</dbReference>
<dbReference type="GO" id="GO:0006402">
    <property type="term" value="P:mRNA catabolic process"/>
    <property type="evidence" value="ECO:0007669"/>
    <property type="project" value="UniProtKB-UniRule"/>
</dbReference>
<dbReference type="GO" id="GO:0006396">
    <property type="term" value="P:RNA processing"/>
    <property type="evidence" value="ECO:0007669"/>
    <property type="project" value="InterPro"/>
</dbReference>
<dbReference type="CDD" id="cd02393">
    <property type="entry name" value="KH-I_PNPase"/>
    <property type="match status" value="1"/>
</dbReference>
<dbReference type="CDD" id="cd11363">
    <property type="entry name" value="RNase_PH_PNPase_1"/>
    <property type="match status" value="1"/>
</dbReference>
<dbReference type="CDD" id="cd11364">
    <property type="entry name" value="RNase_PH_PNPase_2"/>
    <property type="match status" value="1"/>
</dbReference>
<dbReference type="CDD" id="cd04472">
    <property type="entry name" value="S1_PNPase"/>
    <property type="match status" value="1"/>
</dbReference>
<dbReference type="FunFam" id="2.40.50.140:FF:000023">
    <property type="entry name" value="Polyribonucleotide nucleotidyltransferase"/>
    <property type="match status" value="1"/>
</dbReference>
<dbReference type="FunFam" id="3.30.1370.10:FF:000001">
    <property type="entry name" value="Polyribonucleotide nucleotidyltransferase"/>
    <property type="match status" value="1"/>
</dbReference>
<dbReference type="FunFam" id="3.30.230.70:FF:000001">
    <property type="entry name" value="Polyribonucleotide nucleotidyltransferase"/>
    <property type="match status" value="1"/>
</dbReference>
<dbReference type="FunFam" id="3.30.230.70:FF:000002">
    <property type="entry name" value="Polyribonucleotide nucleotidyltransferase"/>
    <property type="match status" value="1"/>
</dbReference>
<dbReference type="Gene3D" id="3.30.230.70">
    <property type="entry name" value="GHMP Kinase, N-terminal domain"/>
    <property type="match status" value="2"/>
</dbReference>
<dbReference type="Gene3D" id="3.30.1370.10">
    <property type="entry name" value="K Homology domain, type 1"/>
    <property type="match status" value="1"/>
</dbReference>
<dbReference type="Gene3D" id="2.40.50.140">
    <property type="entry name" value="Nucleic acid-binding proteins"/>
    <property type="match status" value="1"/>
</dbReference>
<dbReference type="HAMAP" id="MF_01595">
    <property type="entry name" value="PNPase"/>
    <property type="match status" value="1"/>
</dbReference>
<dbReference type="InterPro" id="IPR001247">
    <property type="entry name" value="ExoRNase_PH_dom1"/>
</dbReference>
<dbReference type="InterPro" id="IPR015847">
    <property type="entry name" value="ExoRNase_PH_dom2"/>
</dbReference>
<dbReference type="InterPro" id="IPR036345">
    <property type="entry name" value="ExoRNase_PH_dom2_sf"/>
</dbReference>
<dbReference type="InterPro" id="IPR004087">
    <property type="entry name" value="KH_dom"/>
</dbReference>
<dbReference type="InterPro" id="IPR004088">
    <property type="entry name" value="KH_dom_type_1"/>
</dbReference>
<dbReference type="InterPro" id="IPR036612">
    <property type="entry name" value="KH_dom_type_1_sf"/>
</dbReference>
<dbReference type="InterPro" id="IPR012340">
    <property type="entry name" value="NA-bd_OB-fold"/>
</dbReference>
<dbReference type="InterPro" id="IPR012162">
    <property type="entry name" value="PNPase"/>
</dbReference>
<dbReference type="InterPro" id="IPR027408">
    <property type="entry name" value="PNPase/RNase_PH_dom_sf"/>
</dbReference>
<dbReference type="InterPro" id="IPR015848">
    <property type="entry name" value="PNPase_PH_RNA-bd_bac/org-type"/>
</dbReference>
<dbReference type="InterPro" id="IPR020568">
    <property type="entry name" value="Ribosomal_Su5_D2-typ_SF"/>
</dbReference>
<dbReference type="InterPro" id="IPR003029">
    <property type="entry name" value="S1_domain"/>
</dbReference>
<dbReference type="NCBIfam" id="TIGR03591">
    <property type="entry name" value="polynuc_phos"/>
    <property type="match status" value="1"/>
</dbReference>
<dbReference type="NCBIfam" id="NF008805">
    <property type="entry name" value="PRK11824.1"/>
    <property type="match status" value="1"/>
</dbReference>
<dbReference type="PANTHER" id="PTHR11252">
    <property type="entry name" value="POLYRIBONUCLEOTIDE NUCLEOTIDYLTRANSFERASE"/>
    <property type="match status" value="1"/>
</dbReference>
<dbReference type="PANTHER" id="PTHR11252:SF0">
    <property type="entry name" value="POLYRIBONUCLEOTIDE NUCLEOTIDYLTRANSFERASE 1, MITOCHONDRIAL"/>
    <property type="match status" value="1"/>
</dbReference>
<dbReference type="Pfam" id="PF00013">
    <property type="entry name" value="KH_1"/>
    <property type="match status" value="1"/>
</dbReference>
<dbReference type="Pfam" id="PF03726">
    <property type="entry name" value="PNPase"/>
    <property type="match status" value="1"/>
</dbReference>
<dbReference type="Pfam" id="PF01138">
    <property type="entry name" value="RNase_PH"/>
    <property type="match status" value="2"/>
</dbReference>
<dbReference type="Pfam" id="PF03725">
    <property type="entry name" value="RNase_PH_C"/>
    <property type="match status" value="1"/>
</dbReference>
<dbReference type="Pfam" id="PF00575">
    <property type="entry name" value="S1"/>
    <property type="match status" value="1"/>
</dbReference>
<dbReference type="PIRSF" id="PIRSF005499">
    <property type="entry name" value="PNPase"/>
    <property type="match status" value="1"/>
</dbReference>
<dbReference type="SMART" id="SM00322">
    <property type="entry name" value="KH"/>
    <property type="match status" value="1"/>
</dbReference>
<dbReference type="SMART" id="SM00316">
    <property type="entry name" value="S1"/>
    <property type="match status" value="1"/>
</dbReference>
<dbReference type="SUPFAM" id="SSF54791">
    <property type="entry name" value="Eukaryotic type KH-domain (KH-domain type I)"/>
    <property type="match status" value="1"/>
</dbReference>
<dbReference type="SUPFAM" id="SSF50249">
    <property type="entry name" value="Nucleic acid-binding proteins"/>
    <property type="match status" value="1"/>
</dbReference>
<dbReference type="SUPFAM" id="SSF55666">
    <property type="entry name" value="Ribonuclease PH domain 2-like"/>
    <property type="match status" value="2"/>
</dbReference>
<dbReference type="SUPFAM" id="SSF54211">
    <property type="entry name" value="Ribosomal protein S5 domain 2-like"/>
    <property type="match status" value="2"/>
</dbReference>
<dbReference type="PROSITE" id="PS50084">
    <property type="entry name" value="KH_TYPE_1"/>
    <property type="match status" value="1"/>
</dbReference>
<dbReference type="PROSITE" id="PS50126">
    <property type="entry name" value="S1"/>
    <property type="match status" value="1"/>
</dbReference>
<gene>
    <name evidence="1" type="primary">pnp</name>
    <name type="ordered locus">CPR_1652</name>
</gene>
<reference key="1">
    <citation type="journal article" date="2006" name="Genome Res.">
        <title>Skewed genomic variability in strains of the toxigenic bacterial pathogen, Clostridium perfringens.</title>
        <authorList>
            <person name="Myers G.S.A."/>
            <person name="Rasko D.A."/>
            <person name="Cheung J.K."/>
            <person name="Ravel J."/>
            <person name="Seshadri R."/>
            <person name="DeBoy R.T."/>
            <person name="Ren Q."/>
            <person name="Varga J."/>
            <person name="Awad M.M."/>
            <person name="Brinkac L.M."/>
            <person name="Daugherty S.C."/>
            <person name="Haft D.H."/>
            <person name="Dodson R.J."/>
            <person name="Madupu R."/>
            <person name="Nelson W.C."/>
            <person name="Rosovitz M.J."/>
            <person name="Sullivan S.A."/>
            <person name="Khouri H."/>
            <person name="Dimitrov G.I."/>
            <person name="Watkins K.L."/>
            <person name="Mulligan S."/>
            <person name="Benton J."/>
            <person name="Radune D."/>
            <person name="Fisher D.J."/>
            <person name="Atkins H.S."/>
            <person name="Hiscox T."/>
            <person name="Jost B.H."/>
            <person name="Billington S.J."/>
            <person name="Songer J.G."/>
            <person name="McClane B.A."/>
            <person name="Titball R.W."/>
            <person name="Rood J.I."/>
            <person name="Melville S.B."/>
            <person name="Paulsen I.T."/>
        </authorList>
    </citation>
    <scope>NUCLEOTIDE SEQUENCE [LARGE SCALE GENOMIC DNA]</scope>
    <source>
        <strain>SM101 / Type A</strain>
    </source>
</reference>
<name>PNP_CLOPS</name>
<comment type="function">
    <text evidence="1">Involved in mRNA degradation. Catalyzes the phosphorolysis of single-stranded polyribonucleotides processively in the 3'- to 5'-direction.</text>
</comment>
<comment type="catalytic activity">
    <reaction evidence="1">
        <text>RNA(n+1) + phosphate = RNA(n) + a ribonucleoside 5'-diphosphate</text>
        <dbReference type="Rhea" id="RHEA:22096"/>
        <dbReference type="Rhea" id="RHEA-COMP:14527"/>
        <dbReference type="Rhea" id="RHEA-COMP:17342"/>
        <dbReference type="ChEBI" id="CHEBI:43474"/>
        <dbReference type="ChEBI" id="CHEBI:57930"/>
        <dbReference type="ChEBI" id="CHEBI:140395"/>
        <dbReference type="EC" id="2.7.7.8"/>
    </reaction>
</comment>
<comment type="cofactor">
    <cofactor evidence="1">
        <name>Mg(2+)</name>
        <dbReference type="ChEBI" id="CHEBI:18420"/>
    </cofactor>
</comment>
<comment type="subcellular location">
    <subcellularLocation>
        <location evidence="1">Cytoplasm</location>
    </subcellularLocation>
</comment>
<comment type="similarity">
    <text evidence="1">Belongs to the polyribonucleotide nucleotidyltransferase family.</text>
</comment>
<organism>
    <name type="scientific">Clostridium perfringens (strain SM101 / Type A)</name>
    <dbReference type="NCBI Taxonomy" id="289380"/>
    <lineage>
        <taxon>Bacteria</taxon>
        <taxon>Bacillati</taxon>
        <taxon>Bacillota</taxon>
        <taxon>Clostridia</taxon>
        <taxon>Eubacteriales</taxon>
        <taxon>Clostridiaceae</taxon>
        <taxon>Clostridium</taxon>
    </lineage>
</organism>
<protein>
    <recommendedName>
        <fullName evidence="1">Polyribonucleotide nucleotidyltransferase</fullName>
        <ecNumber evidence="1">2.7.7.8</ecNumber>
    </recommendedName>
    <alternativeName>
        <fullName evidence="1">Polynucleotide phosphorylase</fullName>
        <shortName evidence="1">PNPase</shortName>
    </alternativeName>
</protein>
<keyword id="KW-0963">Cytoplasm</keyword>
<keyword id="KW-0460">Magnesium</keyword>
<keyword id="KW-0479">Metal-binding</keyword>
<keyword id="KW-0548">Nucleotidyltransferase</keyword>
<keyword id="KW-0694">RNA-binding</keyword>
<keyword id="KW-0808">Transferase</keyword>
<feature type="chain" id="PRO_0000329602" description="Polyribonucleotide nucleotidyltransferase">
    <location>
        <begin position="1"/>
        <end position="702"/>
    </location>
</feature>
<feature type="domain" description="KH" evidence="1">
    <location>
        <begin position="552"/>
        <end position="611"/>
    </location>
</feature>
<feature type="domain" description="S1 motif" evidence="1">
    <location>
        <begin position="621"/>
        <end position="689"/>
    </location>
</feature>
<feature type="binding site" evidence="1">
    <location>
        <position position="485"/>
    </location>
    <ligand>
        <name>Mg(2+)</name>
        <dbReference type="ChEBI" id="CHEBI:18420"/>
    </ligand>
</feature>
<feature type="binding site" evidence="1">
    <location>
        <position position="491"/>
    </location>
    <ligand>
        <name>Mg(2+)</name>
        <dbReference type="ChEBI" id="CHEBI:18420"/>
    </ligand>
</feature>
<evidence type="ECO:0000255" key="1">
    <source>
        <dbReference type="HAMAP-Rule" id="MF_01595"/>
    </source>
</evidence>
<accession>Q0SSE0</accession>
<sequence>MNHTHETIIAGRPMKVEFGKLGMLSDAAILMSYGDTVILTNVNASEKPREGIDFFPLSVEYEERLYSVGKIPGGFIKREGKPSEKAILNGRAIDRPLRPLFPKGYRNDVQVVCTVVSVENDNLPEILAINAASMALCLSSIPFTTPVAAVQVGLIGEEFILNPTSKEREESSLQLTVCATKERVMMIEAGGDEIPEDTMINAIKFGFDKCQDIIKFQEEAVSMFGKEKKVPELHKVPEEIEEAVREFAFDMISESMHITDRDERNAAMDEVKAKINEEFEEKYPDNMSDIGEAVYDMQKEVVRHMLLKEGKRPDGRAFDEVRNIGCEVGLLPRTHGTGLFTRGLTQVMTVATLGAISEIQILDGIGEEESKRYMHHYNFPAYSVGEVRPLRGPGRREIGHGALAERALEPLIPSEAEFPYTIRLVSEVLSSNGSTSQASVCGSTLALLDAGVPIKRPAAGIAMGLITSKDLTEEEVLTDIQGLEDFFGDMDFKVAGTEEGITSIQVDTKIKGLSEKVIHDAIYGARKARLMILDKIKECIPAPREEVSKYAPKTSTLQIDPEKIRDVIGAGGKVINKIIADTGVKIDIKEDGLVYVSSAESEGVKEAVKIIEGLTKEVKSGEIYLGKVTKIAQFGAFVEVLPNKEGLVHISKLDNKRVEKVEDIVSVGDEILVKVTEIDSQGRINLSRKDAIKEAEEENKQQ</sequence>